<sequence length="284" mass="30707">MIQTITDLSALRALVTGWKREGLRVALVPTMGNLHAGHYSLVMLARQYADRVVSSVFVNPTQFGPNEDFARYPRTPEADMRGLEDAGCDALWLPDVDTMYPLGTALATPIHAPGVSDVLEGVCRPGHFDGVCTVVARLFNQVQPDVAAFGKKDYQQLAVIRQMVADLAFPIEILGGSIVREADGLAMSSRNQYLSADDRPISAQIRKVLLQMRDSHAAGVPRLQVEAAATQALEAVGFRVDYTALRLPDLSEPDDGASNPAAGPRVALIAARIGSTRLIDNLEF</sequence>
<feature type="chain" id="PRO_0000128291" description="Pantothenate synthetase">
    <location>
        <begin position="1"/>
        <end position="284"/>
    </location>
</feature>
<feature type="active site" description="Proton donor" evidence="1">
    <location>
        <position position="38"/>
    </location>
</feature>
<feature type="binding site" evidence="1">
    <location>
        <begin position="31"/>
        <end position="38"/>
    </location>
    <ligand>
        <name>ATP</name>
        <dbReference type="ChEBI" id="CHEBI:30616"/>
    </ligand>
</feature>
<feature type="binding site" evidence="1">
    <location>
        <position position="62"/>
    </location>
    <ligand>
        <name>(R)-pantoate</name>
        <dbReference type="ChEBI" id="CHEBI:15980"/>
    </ligand>
</feature>
<feature type="binding site" evidence="1">
    <location>
        <position position="62"/>
    </location>
    <ligand>
        <name>beta-alanine</name>
        <dbReference type="ChEBI" id="CHEBI:57966"/>
    </ligand>
</feature>
<feature type="binding site" evidence="1">
    <location>
        <begin position="150"/>
        <end position="153"/>
    </location>
    <ligand>
        <name>ATP</name>
        <dbReference type="ChEBI" id="CHEBI:30616"/>
    </ligand>
</feature>
<feature type="binding site" evidence="1">
    <location>
        <position position="156"/>
    </location>
    <ligand>
        <name>(R)-pantoate</name>
        <dbReference type="ChEBI" id="CHEBI:15980"/>
    </ligand>
</feature>
<feature type="binding site" evidence="1">
    <location>
        <position position="179"/>
    </location>
    <ligand>
        <name>ATP</name>
        <dbReference type="ChEBI" id="CHEBI:30616"/>
    </ligand>
</feature>
<feature type="binding site" evidence="1">
    <location>
        <begin position="187"/>
        <end position="190"/>
    </location>
    <ligand>
        <name>ATP</name>
        <dbReference type="ChEBI" id="CHEBI:30616"/>
    </ligand>
</feature>
<proteinExistence type="inferred from homology"/>
<name>PANC_XANC8</name>
<gene>
    <name evidence="1" type="primary">panC</name>
    <name type="ordered locus">XC_2467</name>
</gene>
<keyword id="KW-0067">ATP-binding</keyword>
<keyword id="KW-0963">Cytoplasm</keyword>
<keyword id="KW-0436">Ligase</keyword>
<keyword id="KW-0547">Nucleotide-binding</keyword>
<keyword id="KW-0566">Pantothenate biosynthesis</keyword>
<protein>
    <recommendedName>
        <fullName evidence="1">Pantothenate synthetase</fullName>
        <shortName evidence="1">PS</shortName>
        <ecNumber evidence="1">6.3.2.1</ecNumber>
    </recommendedName>
    <alternativeName>
        <fullName evidence="1">Pantoate--beta-alanine ligase</fullName>
    </alternativeName>
    <alternativeName>
        <fullName evidence="1">Pantoate-activating enzyme</fullName>
    </alternativeName>
</protein>
<dbReference type="EC" id="6.3.2.1" evidence="1"/>
<dbReference type="EMBL" id="CP000050">
    <property type="protein sequence ID" value="AAY49517.1"/>
    <property type="molecule type" value="Genomic_DNA"/>
</dbReference>
<dbReference type="RefSeq" id="WP_011036942.1">
    <property type="nucleotide sequence ID" value="NZ_CP155948.1"/>
</dbReference>
<dbReference type="SMR" id="Q4UTV6"/>
<dbReference type="KEGG" id="xcb:XC_2467"/>
<dbReference type="HOGENOM" id="CLU_047148_0_0_6"/>
<dbReference type="UniPathway" id="UPA00028">
    <property type="reaction ID" value="UER00005"/>
</dbReference>
<dbReference type="Proteomes" id="UP000000420">
    <property type="component" value="Chromosome"/>
</dbReference>
<dbReference type="GO" id="GO:0005829">
    <property type="term" value="C:cytosol"/>
    <property type="evidence" value="ECO:0007669"/>
    <property type="project" value="TreeGrafter"/>
</dbReference>
<dbReference type="GO" id="GO:0005524">
    <property type="term" value="F:ATP binding"/>
    <property type="evidence" value="ECO:0007669"/>
    <property type="project" value="UniProtKB-KW"/>
</dbReference>
<dbReference type="GO" id="GO:0004592">
    <property type="term" value="F:pantoate-beta-alanine ligase activity"/>
    <property type="evidence" value="ECO:0007669"/>
    <property type="project" value="UniProtKB-UniRule"/>
</dbReference>
<dbReference type="GO" id="GO:0015940">
    <property type="term" value="P:pantothenate biosynthetic process"/>
    <property type="evidence" value="ECO:0007669"/>
    <property type="project" value="UniProtKB-UniRule"/>
</dbReference>
<dbReference type="CDD" id="cd00560">
    <property type="entry name" value="PanC"/>
    <property type="match status" value="1"/>
</dbReference>
<dbReference type="FunFam" id="3.40.50.620:FF:000114">
    <property type="entry name" value="Pantothenate synthetase"/>
    <property type="match status" value="1"/>
</dbReference>
<dbReference type="Gene3D" id="3.40.50.620">
    <property type="entry name" value="HUPs"/>
    <property type="match status" value="1"/>
</dbReference>
<dbReference type="Gene3D" id="3.30.1300.10">
    <property type="entry name" value="Pantoate-beta-alanine ligase, C-terminal domain"/>
    <property type="match status" value="1"/>
</dbReference>
<dbReference type="HAMAP" id="MF_00158">
    <property type="entry name" value="PanC"/>
    <property type="match status" value="1"/>
</dbReference>
<dbReference type="InterPro" id="IPR003721">
    <property type="entry name" value="Pantoate_ligase"/>
</dbReference>
<dbReference type="InterPro" id="IPR042176">
    <property type="entry name" value="Pantoate_ligase_C"/>
</dbReference>
<dbReference type="InterPro" id="IPR014729">
    <property type="entry name" value="Rossmann-like_a/b/a_fold"/>
</dbReference>
<dbReference type="NCBIfam" id="TIGR00018">
    <property type="entry name" value="panC"/>
    <property type="match status" value="1"/>
</dbReference>
<dbReference type="PANTHER" id="PTHR21299">
    <property type="entry name" value="CYTIDYLATE KINASE/PANTOATE-BETA-ALANINE LIGASE"/>
    <property type="match status" value="1"/>
</dbReference>
<dbReference type="PANTHER" id="PTHR21299:SF1">
    <property type="entry name" value="PANTOATE--BETA-ALANINE LIGASE"/>
    <property type="match status" value="1"/>
</dbReference>
<dbReference type="Pfam" id="PF02569">
    <property type="entry name" value="Pantoate_ligase"/>
    <property type="match status" value="1"/>
</dbReference>
<dbReference type="SUPFAM" id="SSF52374">
    <property type="entry name" value="Nucleotidylyl transferase"/>
    <property type="match status" value="1"/>
</dbReference>
<reference key="1">
    <citation type="journal article" date="2005" name="Genome Res.">
        <title>Comparative and functional genomic analyses of the pathogenicity of phytopathogen Xanthomonas campestris pv. campestris.</title>
        <authorList>
            <person name="Qian W."/>
            <person name="Jia Y."/>
            <person name="Ren S.-X."/>
            <person name="He Y.-Q."/>
            <person name="Feng J.-X."/>
            <person name="Lu L.-F."/>
            <person name="Sun Q."/>
            <person name="Ying G."/>
            <person name="Tang D.-J."/>
            <person name="Tang H."/>
            <person name="Wu W."/>
            <person name="Hao P."/>
            <person name="Wang L."/>
            <person name="Jiang B.-L."/>
            <person name="Zeng S."/>
            <person name="Gu W.-Y."/>
            <person name="Lu G."/>
            <person name="Rong L."/>
            <person name="Tian Y."/>
            <person name="Yao Z."/>
            <person name="Fu G."/>
            <person name="Chen B."/>
            <person name="Fang R."/>
            <person name="Qiang B."/>
            <person name="Chen Z."/>
            <person name="Zhao G.-P."/>
            <person name="Tang J.-L."/>
            <person name="He C."/>
        </authorList>
    </citation>
    <scope>NUCLEOTIDE SEQUENCE [LARGE SCALE GENOMIC DNA]</scope>
    <source>
        <strain>8004</strain>
    </source>
</reference>
<organism>
    <name type="scientific">Xanthomonas campestris pv. campestris (strain 8004)</name>
    <dbReference type="NCBI Taxonomy" id="314565"/>
    <lineage>
        <taxon>Bacteria</taxon>
        <taxon>Pseudomonadati</taxon>
        <taxon>Pseudomonadota</taxon>
        <taxon>Gammaproteobacteria</taxon>
        <taxon>Lysobacterales</taxon>
        <taxon>Lysobacteraceae</taxon>
        <taxon>Xanthomonas</taxon>
    </lineage>
</organism>
<accession>Q4UTV6</accession>
<evidence type="ECO:0000255" key="1">
    <source>
        <dbReference type="HAMAP-Rule" id="MF_00158"/>
    </source>
</evidence>
<comment type="function">
    <text evidence="1">Catalyzes the condensation of pantoate with beta-alanine in an ATP-dependent reaction via a pantoyl-adenylate intermediate.</text>
</comment>
<comment type="catalytic activity">
    <reaction evidence="1">
        <text>(R)-pantoate + beta-alanine + ATP = (R)-pantothenate + AMP + diphosphate + H(+)</text>
        <dbReference type="Rhea" id="RHEA:10912"/>
        <dbReference type="ChEBI" id="CHEBI:15378"/>
        <dbReference type="ChEBI" id="CHEBI:15980"/>
        <dbReference type="ChEBI" id="CHEBI:29032"/>
        <dbReference type="ChEBI" id="CHEBI:30616"/>
        <dbReference type="ChEBI" id="CHEBI:33019"/>
        <dbReference type="ChEBI" id="CHEBI:57966"/>
        <dbReference type="ChEBI" id="CHEBI:456215"/>
        <dbReference type="EC" id="6.3.2.1"/>
    </reaction>
</comment>
<comment type="pathway">
    <text evidence="1">Cofactor biosynthesis; (R)-pantothenate biosynthesis; (R)-pantothenate from (R)-pantoate and beta-alanine: step 1/1.</text>
</comment>
<comment type="subunit">
    <text evidence="1">Homodimer.</text>
</comment>
<comment type="subcellular location">
    <subcellularLocation>
        <location evidence="1">Cytoplasm</location>
    </subcellularLocation>
</comment>
<comment type="miscellaneous">
    <text evidence="1">The reaction proceeds by a bi uni uni bi ping pong mechanism.</text>
</comment>
<comment type="similarity">
    <text evidence="1">Belongs to the pantothenate synthetase family.</text>
</comment>